<dbReference type="EC" id="3.5.1.88" evidence="1"/>
<dbReference type="EMBL" id="CP000266">
    <property type="protein sequence ID" value="ABF05349.1"/>
    <property type="molecule type" value="Genomic_DNA"/>
</dbReference>
<dbReference type="RefSeq" id="WP_000114986.1">
    <property type="nucleotide sequence ID" value="NC_008258.1"/>
</dbReference>
<dbReference type="SMR" id="Q0T016"/>
<dbReference type="GeneID" id="93778701"/>
<dbReference type="KEGG" id="sfv:SFV_3306"/>
<dbReference type="HOGENOM" id="CLU_061901_2_1_6"/>
<dbReference type="Proteomes" id="UP000000659">
    <property type="component" value="Chromosome"/>
</dbReference>
<dbReference type="GO" id="GO:0046872">
    <property type="term" value="F:metal ion binding"/>
    <property type="evidence" value="ECO:0007669"/>
    <property type="project" value="UniProtKB-KW"/>
</dbReference>
<dbReference type="GO" id="GO:0042586">
    <property type="term" value="F:peptide deformylase activity"/>
    <property type="evidence" value="ECO:0007669"/>
    <property type="project" value="UniProtKB-UniRule"/>
</dbReference>
<dbReference type="GO" id="GO:0043686">
    <property type="term" value="P:co-translational protein modification"/>
    <property type="evidence" value="ECO:0007669"/>
    <property type="project" value="TreeGrafter"/>
</dbReference>
<dbReference type="GO" id="GO:0006412">
    <property type="term" value="P:translation"/>
    <property type="evidence" value="ECO:0007669"/>
    <property type="project" value="UniProtKB-UniRule"/>
</dbReference>
<dbReference type="CDD" id="cd00487">
    <property type="entry name" value="Pep_deformylase"/>
    <property type="match status" value="1"/>
</dbReference>
<dbReference type="FunFam" id="3.90.45.10:FF:000001">
    <property type="entry name" value="Peptide deformylase"/>
    <property type="match status" value="1"/>
</dbReference>
<dbReference type="Gene3D" id="3.90.45.10">
    <property type="entry name" value="Peptide deformylase"/>
    <property type="match status" value="1"/>
</dbReference>
<dbReference type="HAMAP" id="MF_00163">
    <property type="entry name" value="Pep_deformylase"/>
    <property type="match status" value="1"/>
</dbReference>
<dbReference type="InterPro" id="IPR023635">
    <property type="entry name" value="Peptide_deformylase"/>
</dbReference>
<dbReference type="InterPro" id="IPR036821">
    <property type="entry name" value="Peptide_deformylase_sf"/>
</dbReference>
<dbReference type="NCBIfam" id="TIGR00079">
    <property type="entry name" value="pept_deformyl"/>
    <property type="match status" value="1"/>
</dbReference>
<dbReference type="NCBIfam" id="NF001159">
    <property type="entry name" value="PRK00150.1-3"/>
    <property type="match status" value="1"/>
</dbReference>
<dbReference type="PANTHER" id="PTHR10458">
    <property type="entry name" value="PEPTIDE DEFORMYLASE"/>
    <property type="match status" value="1"/>
</dbReference>
<dbReference type="PANTHER" id="PTHR10458:SF21">
    <property type="entry name" value="PEPTIDE DEFORMYLASE"/>
    <property type="match status" value="1"/>
</dbReference>
<dbReference type="Pfam" id="PF01327">
    <property type="entry name" value="Pep_deformylase"/>
    <property type="match status" value="1"/>
</dbReference>
<dbReference type="PIRSF" id="PIRSF004749">
    <property type="entry name" value="Pep_def"/>
    <property type="match status" value="1"/>
</dbReference>
<dbReference type="PRINTS" id="PR01576">
    <property type="entry name" value="PDEFORMYLASE"/>
</dbReference>
<dbReference type="SUPFAM" id="SSF56420">
    <property type="entry name" value="Peptide deformylase"/>
    <property type="match status" value="1"/>
</dbReference>
<protein>
    <recommendedName>
        <fullName evidence="1">Peptide deformylase</fullName>
        <shortName evidence="1">PDF</shortName>
        <ecNumber evidence="1">3.5.1.88</ecNumber>
    </recommendedName>
    <alternativeName>
        <fullName evidence="1">Polypeptide deformylase</fullName>
    </alternativeName>
</protein>
<keyword id="KW-0378">Hydrolase</keyword>
<keyword id="KW-0408">Iron</keyword>
<keyword id="KW-0479">Metal-binding</keyword>
<keyword id="KW-0648">Protein biosynthesis</keyword>
<proteinExistence type="inferred from homology"/>
<gene>
    <name evidence="1" type="primary">def</name>
    <name type="ordered locus">SFV_3306</name>
</gene>
<evidence type="ECO:0000255" key="1">
    <source>
        <dbReference type="HAMAP-Rule" id="MF_00163"/>
    </source>
</evidence>
<name>DEF_SHIF8</name>
<sequence>MSVLQVLHIPDERLRKVAKPVEEVNAEIQRIVDDMFETMYAEEGIGLAATQVDIHQRIIVIDVSENRDERLVLINPELLEKSGETGIEEGCLSIPEQRALVPRAEKVKIRALDRDGKPFELEAEGLLAICIQHEMDHLVGKLFMDYLSPLKQQRIRQKVEKLDRLKARA</sequence>
<feature type="chain" id="PRO_0000301098" description="Peptide deformylase">
    <location>
        <begin position="1"/>
        <end position="169"/>
    </location>
</feature>
<feature type="active site" evidence="1">
    <location>
        <position position="134"/>
    </location>
</feature>
<feature type="binding site" evidence="1">
    <location>
        <position position="91"/>
    </location>
    <ligand>
        <name>Fe cation</name>
        <dbReference type="ChEBI" id="CHEBI:24875"/>
    </ligand>
</feature>
<feature type="binding site" evidence="1">
    <location>
        <position position="133"/>
    </location>
    <ligand>
        <name>Fe cation</name>
        <dbReference type="ChEBI" id="CHEBI:24875"/>
    </ligand>
</feature>
<feature type="binding site" evidence="1">
    <location>
        <position position="137"/>
    </location>
    <ligand>
        <name>Fe cation</name>
        <dbReference type="ChEBI" id="CHEBI:24875"/>
    </ligand>
</feature>
<organism>
    <name type="scientific">Shigella flexneri serotype 5b (strain 8401)</name>
    <dbReference type="NCBI Taxonomy" id="373384"/>
    <lineage>
        <taxon>Bacteria</taxon>
        <taxon>Pseudomonadati</taxon>
        <taxon>Pseudomonadota</taxon>
        <taxon>Gammaproteobacteria</taxon>
        <taxon>Enterobacterales</taxon>
        <taxon>Enterobacteriaceae</taxon>
        <taxon>Shigella</taxon>
    </lineage>
</organism>
<reference key="1">
    <citation type="journal article" date="2006" name="BMC Genomics">
        <title>Complete genome sequence of Shigella flexneri 5b and comparison with Shigella flexneri 2a.</title>
        <authorList>
            <person name="Nie H."/>
            <person name="Yang F."/>
            <person name="Zhang X."/>
            <person name="Yang J."/>
            <person name="Chen L."/>
            <person name="Wang J."/>
            <person name="Xiong Z."/>
            <person name="Peng J."/>
            <person name="Sun L."/>
            <person name="Dong J."/>
            <person name="Xue Y."/>
            <person name="Xu X."/>
            <person name="Chen S."/>
            <person name="Yao Z."/>
            <person name="Shen Y."/>
            <person name="Jin Q."/>
        </authorList>
    </citation>
    <scope>NUCLEOTIDE SEQUENCE [LARGE SCALE GENOMIC DNA]</scope>
    <source>
        <strain>8401</strain>
    </source>
</reference>
<comment type="function">
    <text evidence="1">Removes the formyl group from the N-terminal Met of newly synthesized proteins. Requires at least a dipeptide for an efficient rate of reaction. N-terminal L-methionine is a prerequisite for activity but the enzyme has broad specificity at other positions.</text>
</comment>
<comment type="catalytic activity">
    <reaction evidence="1">
        <text>N-terminal N-formyl-L-methionyl-[peptide] + H2O = N-terminal L-methionyl-[peptide] + formate</text>
        <dbReference type="Rhea" id="RHEA:24420"/>
        <dbReference type="Rhea" id="RHEA-COMP:10639"/>
        <dbReference type="Rhea" id="RHEA-COMP:10640"/>
        <dbReference type="ChEBI" id="CHEBI:15377"/>
        <dbReference type="ChEBI" id="CHEBI:15740"/>
        <dbReference type="ChEBI" id="CHEBI:49298"/>
        <dbReference type="ChEBI" id="CHEBI:64731"/>
        <dbReference type="EC" id="3.5.1.88"/>
    </reaction>
</comment>
<comment type="cofactor">
    <cofactor evidence="1">
        <name>Fe(2+)</name>
        <dbReference type="ChEBI" id="CHEBI:29033"/>
    </cofactor>
    <text evidence="1">Binds 1 Fe(2+) ion.</text>
</comment>
<comment type="similarity">
    <text evidence="1">Belongs to the polypeptide deformylase family.</text>
</comment>
<accession>Q0T016</accession>